<comment type="function">
    <text evidence="1">Part of the phosphoribosylformylglycinamidine synthase complex involved in the purines biosynthetic pathway. Catalyzes the ATP-dependent conversion of formylglycinamide ribonucleotide (FGAR) and glutamine to yield formylglycinamidine ribonucleotide (FGAM) and glutamate. The FGAM synthase complex is composed of three subunits. PurQ produces an ammonia molecule by converting glutamine to glutamate. PurL transfers the ammonia molecule to FGAR to form FGAM in an ATP-dependent manner. PurS interacts with PurQ and PurL and is thought to assist in the transfer of the ammonia molecule from PurQ to PurL.</text>
</comment>
<comment type="catalytic activity">
    <reaction evidence="1">
        <text>N(2)-formyl-N(1)-(5-phospho-beta-D-ribosyl)glycinamide + L-glutamine + ATP + H2O = 2-formamido-N(1)-(5-O-phospho-beta-D-ribosyl)acetamidine + L-glutamate + ADP + phosphate + H(+)</text>
        <dbReference type="Rhea" id="RHEA:17129"/>
        <dbReference type="ChEBI" id="CHEBI:15377"/>
        <dbReference type="ChEBI" id="CHEBI:15378"/>
        <dbReference type="ChEBI" id="CHEBI:29985"/>
        <dbReference type="ChEBI" id="CHEBI:30616"/>
        <dbReference type="ChEBI" id="CHEBI:43474"/>
        <dbReference type="ChEBI" id="CHEBI:58359"/>
        <dbReference type="ChEBI" id="CHEBI:147286"/>
        <dbReference type="ChEBI" id="CHEBI:147287"/>
        <dbReference type="ChEBI" id="CHEBI:456216"/>
        <dbReference type="EC" id="6.3.5.3"/>
    </reaction>
</comment>
<comment type="catalytic activity">
    <reaction evidence="1">
        <text>L-glutamine + H2O = L-glutamate + NH4(+)</text>
        <dbReference type="Rhea" id="RHEA:15889"/>
        <dbReference type="ChEBI" id="CHEBI:15377"/>
        <dbReference type="ChEBI" id="CHEBI:28938"/>
        <dbReference type="ChEBI" id="CHEBI:29985"/>
        <dbReference type="ChEBI" id="CHEBI:58359"/>
        <dbReference type="EC" id="3.5.1.2"/>
    </reaction>
</comment>
<comment type="pathway">
    <text evidence="1">Purine metabolism; IMP biosynthesis via de novo pathway; 5-amino-1-(5-phospho-D-ribosyl)imidazole from N(2)-formyl-N(1)-(5-phospho-D-ribosyl)glycinamide: step 1/2.</text>
</comment>
<comment type="subunit">
    <text evidence="1">Part of the FGAM synthase complex composed of 1 PurL, 1 PurQ and 2 PurS subunits.</text>
</comment>
<comment type="subcellular location">
    <subcellularLocation>
        <location evidence="1">Cytoplasm</location>
    </subcellularLocation>
</comment>
<proteinExistence type="inferred from homology"/>
<reference key="1">
    <citation type="journal article" date="2004" name="Proc. Natl. Acad. Sci. U.S.A.">
        <title>Complete genomes of two clinical Staphylococcus aureus strains: evidence for the rapid evolution of virulence and drug resistance.</title>
        <authorList>
            <person name="Holden M.T.G."/>
            <person name="Feil E.J."/>
            <person name="Lindsay J.A."/>
            <person name="Peacock S.J."/>
            <person name="Day N.P.J."/>
            <person name="Enright M.C."/>
            <person name="Foster T.J."/>
            <person name="Moore C.E."/>
            <person name="Hurst L."/>
            <person name="Atkin R."/>
            <person name="Barron A."/>
            <person name="Bason N."/>
            <person name="Bentley S.D."/>
            <person name="Chillingworth C."/>
            <person name="Chillingworth T."/>
            <person name="Churcher C."/>
            <person name="Clark L."/>
            <person name="Corton C."/>
            <person name="Cronin A."/>
            <person name="Doggett J."/>
            <person name="Dowd L."/>
            <person name="Feltwell T."/>
            <person name="Hance Z."/>
            <person name="Harris B."/>
            <person name="Hauser H."/>
            <person name="Holroyd S."/>
            <person name="Jagels K."/>
            <person name="James K.D."/>
            <person name="Lennard N."/>
            <person name="Line A."/>
            <person name="Mayes R."/>
            <person name="Moule S."/>
            <person name="Mungall K."/>
            <person name="Ormond D."/>
            <person name="Quail M.A."/>
            <person name="Rabbinowitsch E."/>
            <person name="Rutherford K.M."/>
            <person name="Sanders M."/>
            <person name="Sharp S."/>
            <person name="Simmonds M."/>
            <person name="Stevens K."/>
            <person name="Whitehead S."/>
            <person name="Barrell B.G."/>
            <person name="Spratt B.G."/>
            <person name="Parkhill J."/>
        </authorList>
    </citation>
    <scope>NUCLEOTIDE SEQUENCE [LARGE SCALE GENOMIC DNA]</scope>
    <source>
        <strain>MSSA476</strain>
    </source>
</reference>
<feature type="chain" id="PRO_0000100587" description="Phosphoribosylformylglycinamidine synthase subunit PurQ">
    <location>
        <begin position="1"/>
        <end position="223"/>
    </location>
</feature>
<feature type="domain" description="Glutamine amidotransferase type-1" evidence="1">
    <location>
        <begin position="3"/>
        <end position="223"/>
    </location>
</feature>
<feature type="active site" description="Nucleophile" evidence="1">
    <location>
        <position position="85"/>
    </location>
</feature>
<feature type="active site" evidence="1">
    <location>
        <position position="193"/>
    </location>
</feature>
<feature type="active site" evidence="1">
    <location>
        <position position="195"/>
    </location>
</feature>
<name>PURQ_STAAS</name>
<gene>
    <name evidence="1" type="primary">purQ</name>
    <name type="ordered locus">SAS1004</name>
</gene>
<sequence length="223" mass="24526">MKFAVLVFPGSNCDRDMFNAAIKSGVEAEYVDYRETSLSGFDGVLIPGGFSFGDYLRSGAMASVAPIISEVKRLAAEGKPVLGVCNGFQILTEIGLLPGALLHNDSHLFISRNEELEIVNNQTAFTNLYEQGEKVIYPVAHGEGHYYCTDEIYQQLKANNQIILKYVNNPNGSYDDIAGIVNKKGNVCGMMPHPERALETLLGTDSGVKLFEAMVKSWREQHV</sequence>
<protein>
    <recommendedName>
        <fullName evidence="1">Phosphoribosylformylglycinamidine synthase subunit PurQ</fullName>
        <shortName evidence="1">FGAM synthase</shortName>
        <ecNumber evidence="1">6.3.5.3</ecNumber>
    </recommendedName>
    <alternativeName>
        <fullName evidence="1">Formylglycinamide ribonucleotide amidotransferase subunit I</fullName>
        <shortName evidence="1">FGAR amidotransferase I</shortName>
        <shortName evidence="1">FGAR-AT I</shortName>
    </alternativeName>
    <alternativeName>
        <fullName evidence="1">Glutaminase PurQ</fullName>
        <ecNumber evidence="1">3.5.1.2</ecNumber>
    </alternativeName>
    <alternativeName>
        <fullName evidence="1">Phosphoribosylformylglycinamidine synthase subunit I</fullName>
    </alternativeName>
</protein>
<evidence type="ECO:0000255" key="1">
    <source>
        <dbReference type="HAMAP-Rule" id="MF_00421"/>
    </source>
</evidence>
<keyword id="KW-0067">ATP-binding</keyword>
<keyword id="KW-0963">Cytoplasm</keyword>
<keyword id="KW-0315">Glutamine amidotransferase</keyword>
<keyword id="KW-0378">Hydrolase</keyword>
<keyword id="KW-0436">Ligase</keyword>
<keyword id="KW-0547">Nucleotide-binding</keyword>
<keyword id="KW-0658">Purine biosynthesis</keyword>
<dbReference type="EC" id="6.3.5.3" evidence="1"/>
<dbReference type="EC" id="3.5.1.2" evidence="1"/>
<dbReference type="EMBL" id="BX571857">
    <property type="protein sequence ID" value="CAG42778.1"/>
    <property type="molecule type" value="Genomic_DNA"/>
</dbReference>
<dbReference type="RefSeq" id="WP_000666801.1">
    <property type="nucleotide sequence ID" value="NC_002953.3"/>
</dbReference>
<dbReference type="SMR" id="Q6GAE5"/>
<dbReference type="KEGG" id="sas:SAS1004"/>
<dbReference type="HOGENOM" id="CLU_001031_3_1_9"/>
<dbReference type="UniPathway" id="UPA00074">
    <property type="reaction ID" value="UER00128"/>
</dbReference>
<dbReference type="GO" id="GO:0005737">
    <property type="term" value="C:cytoplasm"/>
    <property type="evidence" value="ECO:0007669"/>
    <property type="project" value="UniProtKB-SubCell"/>
</dbReference>
<dbReference type="GO" id="GO:0005524">
    <property type="term" value="F:ATP binding"/>
    <property type="evidence" value="ECO:0007669"/>
    <property type="project" value="UniProtKB-KW"/>
</dbReference>
<dbReference type="GO" id="GO:0004359">
    <property type="term" value="F:glutaminase activity"/>
    <property type="evidence" value="ECO:0007669"/>
    <property type="project" value="UniProtKB-EC"/>
</dbReference>
<dbReference type="GO" id="GO:0004642">
    <property type="term" value="F:phosphoribosylformylglycinamidine synthase activity"/>
    <property type="evidence" value="ECO:0007669"/>
    <property type="project" value="UniProtKB-UniRule"/>
</dbReference>
<dbReference type="GO" id="GO:0006189">
    <property type="term" value="P:'de novo' IMP biosynthetic process"/>
    <property type="evidence" value="ECO:0007669"/>
    <property type="project" value="UniProtKB-UniRule"/>
</dbReference>
<dbReference type="CDD" id="cd01740">
    <property type="entry name" value="GATase1_FGAR_AT"/>
    <property type="match status" value="1"/>
</dbReference>
<dbReference type="Gene3D" id="3.40.50.880">
    <property type="match status" value="1"/>
</dbReference>
<dbReference type="HAMAP" id="MF_00421">
    <property type="entry name" value="PurQ"/>
    <property type="match status" value="1"/>
</dbReference>
<dbReference type="InterPro" id="IPR029062">
    <property type="entry name" value="Class_I_gatase-like"/>
</dbReference>
<dbReference type="InterPro" id="IPR010075">
    <property type="entry name" value="PRibForGlyAmidine_synth_PurQ"/>
</dbReference>
<dbReference type="NCBIfam" id="TIGR01737">
    <property type="entry name" value="FGAM_synth_I"/>
    <property type="match status" value="1"/>
</dbReference>
<dbReference type="NCBIfam" id="NF002957">
    <property type="entry name" value="PRK03619.1"/>
    <property type="match status" value="1"/>
</dbReference>
<dbReference type="PANTHER" id="PTHR47552">
    <property type="entry name" value="PHOSPHORIBOSYLFORMYLGLYCINAMIDINE SYNTHASE SUBUNIT PURQ"/>
    <property type="match status" value="1"/>
</dbReference>
<dbReference type="PANTHER" id="PTHR47552:SF1">
    <property type="entry name" value="PHOSPHORIBOSYLFORMYLGLYCINAMIDINE SYNTHASE SUBUNIT PURQ"/>
    <property type="match status" value="1"/>
</dbReference>
<dbReference type="Pfam" id="PF13507">
    <property type="entry name" value="GATase_5"/>
    <property type="match status" value="1"/>
</dbReference>
<dbReference type="PIRSF" id="PIRSF001586">
    <property type="entry name" value="FGAM_synth_I"/>
    <property type="match status" value="1"/>
</dbReference>
<dbReference type="SMART" id="SM01211">
    <property type="entry name" value="GATase_5"/>
    <property type="match status" value="1"/>
</dbReference>
<dbReference type="SUPFAM" id="SSF52317">
    <property type="entry name" value="Class I glutamine amidotransferase-like"/>
    <property type="match status" value="1"/>
</dbReference>
<dbReference type="PROSITE" id="PS51273">
    <property type="entry name" value="GATASE_TYPE_1"/>
    <property type="match status" value="1"/>
</dbReference>
<accession>Q6GAE5</accession>
<organism>
    <name type="scientific">Staphylococcus aureus (strain MSSA476)</name>
    <dbReference type="NCBI Taxonomy" id="282459"/>
    <lineage>
        <taxon>Bacteria</taxon>
        <taxon>Bacillati</taxon>
        <taxon>Bacillota</taxon>
        <taxon>Bacilli</taxon>
        <taxon>Bacillales</taxon>
        <taxon>Staphylococcaceae</taxon>
        <taxon>Staphylococcus</taxon>
    </lineage>
</organism>